<name>THIG_PARC0</name>
<evidence type="ECO:0000255" key="1">
    <source>
        <dbReference type="HAMAP-Rule" id="MF_00443"/>
    </source>
</evidence>
<evidence type="ECO:0000256" key="2">
    <source>
        <dbReference type="SAM" id="MobiDB-lite"/>
    </source>
</evidence>
<dbReference type="EC" id="2.8.1.10" evidence="1"/>
<dbReference type="EMBL" id="CP000512">
    <property type="protein sequence ID" value="ABM33636.1"/>
    <property type="molecule type" value="Genomic_DNA"/>
</dbReference>
<dbReference type="RefSeq" id="WP_011796146.1">
    <property type="nucleotide sequence ID" value="NC_008752.1"/>
</dbReference>
<dbReference type="SMR" id="A1TRP8"/>
<dbReference type="STRING" id="397945.Aave_3070"/>
<dbReference type="GeneID" id="79792755"/>
<dbReference type="KEGG" id="aav:Aave_3070"/>
<dbReference type="eggNOG" id="COG2022">
    <property type="taxonomic scope" value="Bacteria"/>
</dbReference>
<dbReference type="HOGENOM" id="CLU_062233_1_0_4"/>
<dbReference type="OrthoDB" id="9805935at2"/>
<dbReference type="UniPathway" id="UPA00060"/>
<dbReference type="Proteomes" id="UP000002596">
    <property type="component" value="Chromosome"/>
</dbReference>
<dbReference type="GO" id="GO:0005737">
    <property type="term" value="C:cytoplasm"/>
    <property type="evidence" value="ECO:0007669"/>
    <property type="project" value="UniProtKB-SubCell"/>
</dbReference>
<dbReference type="GO" id="GO:1990107">
    <property type="term" value="F:thiazole synthase activity"/>
    <property type="evidence" value="ECO:0007669"/>
    <property type="project" value="UniProtKB-EC"/>
</dbReference>
<dbReference type="GO" id="GO:0009229">
    <property type="term" value="P:thiamine diphosphate biosynthetic process"/>
    <property type="evidence" value="ECO:0007669"/>
    <property type="project" value="UniProtKB-UniRule"/>
</dbReference>
<dbReference type="CDD" id="cd04728">
    <property type="entry name" value="ThiG"/>
    <property type="match status" value="1"/>
</dbReference>
<dbReference type="Gene3D" id="3.20.20.70">
    <property type="entry name" value="Aldolase class I"/>
    <property type="match status" value="1"/>
</dbReference>
<dbReference type="HAMAP" id="MF_00443">
    <property type="entry name" value="ThiG"/>
    <property type="match status" value="1"/>
</dbReference>
<dbReference type="InterPro" id="IPR013785">
    <property type="entry name" value="Aldolase_TIM"/>
</dbReference>
<dbReference type="InterPro" id="IPR033983">
    <property type="entry name" value="Thiazole_synthase_ThiG"/>
</dbReference>
<dbReference type="InterPro" id="IPR008867">
    <property type="entry name" value="ThiG"/>
</dbReference>
<dbReference type="PANTHER" id="PTHR34266">
    <property type="entry name" value="THIAZOLE SYNTHASE"/>
    <property type="match status" value="1"/>
</dbReference>
<dbReference type="PANTHER" id="PTHR34266:SF2">
    <property type="entry name" value="THIAZOLE SYNTHASE"/>
    <property type="match status" value="1"/>
</dbReference>
<dbReference type="Pfam" id="PF05690">
    <property type="entry name" value="ThiG"/>
    <property type="match status" value="1"/>
</dbReference>
<dbReference type="SUPFAM" id="SSF110399">
    <property type="entry name" value="ThiG-like"/>
    <property type="match status" value="1"/>
</dbReference>
<sequence length="269" mass="28790">MPDTASDDALVLYGQRFASRLLLGTARYPSPSVLEAAVRRARPAMVTASLRRQGSNPAEAGSGFWELLRRLDVPVLPNTAGCHSIQEAVTTAQMAREVFGTPWIKLELIGDDYTLQPDTLNLVEAASQLVRDGFHVLPYCTEDLVLCQRLVDVGCQAVMPWAAPIGTGRGPVNPYALRTLRERLDVPLLVDAGLGLPSHACQVMEWGYDGVLLNTAVALAQDPVAMAGAFADAVQAGRTARQAGAMSAQDAAQPSTPVLGTPFWHHDHG</sequence>
<comment type="function">
    <text evidence="1">Catalyzes the rearrangement of 1-deoxy-D-xylulose 5-phosphate (DXP) to produce the thiazole phosphate moiety of thiamine. Sulfur is provided by the thiocarboxylate moiety of the carrier protein ThiS. In vitro, sulfur can be provided by H(2)S.</text>
</comment>
<comment type="catalytic activity">
    <reaction evidence="1">
        <text>[ThiS sulfur-carrier protein]-C-terminal-Gly-aminoethanethioate + 2-iminoacetate + 1-deoxy-D-xylulose 5-phosphate = [ThiS sulfur-carrier protein]-C-terminal Gly-Gly + 2-[(2R,5Z)-2-carboxy-4-methylthiazol-5(2H)-ylidene]ethyl phosphate + 2 H2O + H(+)</text>
        <dbReference type="Rhea" id="RHEA:26297"/>
        <dbReference type="Rhea" id="RHEA-COMP:12909"/>
        <dbReference type="Rhea" id="RHEA-COMP:19908"/>
        <dbReference type="ChEBI" id="CHEBI:15377"/>
        <dbReference type="ChEBI" id="CHEBI:15378"/>
        <dbReference type="ChEBI" id="CHEBI:57792"/>
        <dbReference type="ChEBI" id="CHEBI:62899"/>
        <dbReference type="ChEBI" id="CHEBI:77846"/>
        <dbReference type="ChEBI" id="CHEBI:90778"/>
        <dbReference type="ChEBI" id="CHEBI:232372"/>
        <dbReference type="EC" id="2.8.1.10"/>
    </reaction>
</comment>
<comment type="pathway">
    <text evidence="1">Cofactor biosynthesis; thiamine diphosphate biosynthesis.</text>
</comment>
<comment type="subunit">
    <text evidence="1">Homotetramer. Forms heterodimers with either ThiH or ThiS.</text>
</comment>
<comment type="subcellular location">
    <subcellularLocation>
        <location evidence="1">Cytoplasm</location>
    </subcellularLocation>
</comment>
<comment type="similarity">
    <text evidence="1">Belongs to the ThiG family.</text>
</comment>
<proteinExistence type="inferred from homology"/>
<keyword id="KW-0963">Cytoplasm</keyword>
<keyword id="KW-0704">Schiff base</keyword>
<keyword id="KW-0784">Thiamine biosynthesis</keyword>
<keyword id="KW-0808">Transferase</keyword>
<gene>
    <name evidence="1" type="primary">thiG</name>
    <name type="ordered locus">Aave_3070</name>
</gene>
<feature type="chain" id="PRO_1000025988" description="Thiazole synthase">
    <location>
        <begin position="1"/>
        <end position="269"/>
    </location>
</feature>
<feature type="region of interest" description="Disordered" evidence="2">
    <location>
        <begin position="245"/>
        <end position="269"/>
    </location>
</feature>
<feature type="active site" description="Schiff-base intermediate with DXP" evidence="1">
    <location>
        <position position="105"/>
    </location>
</feature>
<feature type="binding site" evidence="1">
    <location>
        <position position="166"/>
    </location>
    <ligand>
        <name>1-deoxy-D-xylulose 5-phosphate</name>
        <dbReference type="ChEBI" id="CHEBI:57792"/>
    </ligand>
</feature>
<feature type="binding site" evidence="1">
    <location>
        <begin position="192"/>
        <end position="193"/>
    </location>
    <ligand>
        <name>1-deoxy-D-xylulose 5-phosphate</name>
        <dbReference type="ChEBI" id="CHEBI:57792"/>
    </ligand>
</feature>
<feature type="binding site" evidence="1">
    <location>
        <begin position="214"/>
        <end position="215"/>
    </location>
    <ligand>
        <name>1-deoxy-D-xylulose 5-phosphate</name>
        <dbReference type="ChEBI" id="CHEBI:57792"/>
    </ligand>
</feature>
<protein>
    <recommendedName>
        <fullName evidence="1">Thiazole synthase</fullName>
        <ecNumber evidence="1">2.8.1.10</ecNumber>
    </recommendedName>
</protein>
<reference key="1">
    <citation type="submission" date="2006-12" db="EMBL/GenBank/DDBJ databases">
        <title>Complete sequence of Acidovorax avenae subsp. citrulli AAC00-1.</title>
        <authorList>
            <person name="Copeland A."/>
            <person name="Lucas S."/>
            <person name="Lapidus A."/>
            <person name="Barry K."/>
            <person name="Detter J.C."/>
            <person name="Glavina del Rio T."/>
            <person name="Dalin E."/>
            <person name="Tice H."/>
            <person name="Pitluck S."/>
            <person name="Kiss H."/>
            <person name="Brettin T."/>
            <person name="Bruce D."/>
            <person name="Han C."/>
            <person name="Tapia R."/>
            <person name="Gilna P."/>
            <person name="Schmutz J."/>
            <person name="Larimer F."/>
            <person name="Land M."/>
            <person name="Hauser L."/>
            <person name="Kyrpides N."/>
            <person name="Kim E."/>
            <person name="Stahl D."/>
            <person name="Richardson P."/>
        </authorList>
    </citation>
    <scope>NUCLEOTIDE SEQUENCE [LARGE SCALE GENOMIC DNA]</scope>
    <source>
        <strain>AAC00-1</strain>
    </source>
</reference>
<accession>A1TRP8</accession>
<organism>
    <name type="scientific">Paracidovorax citrulli (strain AAC00-1)</name>
    <name type="common">Acidovorax citrulli</name>
    <dbReference type="NCBI Taxonomy" id="397945"/>
    <lineage>
        <taxon>Bacteria</taxon>
        <taxon>Pseudomonadati</taxon>
        <taxon>Pseudomonadota</taxon>
        <taxon>Betaproteobacteria</taxon>
        <taxon>Burkholderiales</taxon>
        <taxon>Comamonadaceae</taxon>
        <taxon>Paracidovorax</taxon>
    </lineage>
</organism>